<keyword id="KW-0027">Amidation</keyword>
<keyword id="KW-0903">Direct protein sequencing</keyword>
<keyword id="KW-0372">Hormone</keyword>
<dbReference type="PIR" id="B27696">
    <property type="entry name" value="B27696"/>
</dbReference>
<dbReference type="GO" id="GO:0005179">
    <property type="term" value="F:hormone activity"/>
    <property type="evidence" value="ECO:0007669"/>
    <property type="project" value="UniProtKB-KW"/>
</dbReference>
<accession>P13737</accession>
<protein>
    <recommendedName>
        <fullName>Contraction-inhibiting peptide 2</fullName>
    </recommendedName>
    <alternativeName>
        <fullName>MIP II</fullName>
    </alternativeName>
</protein>
<organism>
    <name type="scientific">Mytilus edulis</name>
    <name type="common">Blue mussel</name>
    <dbReference type="NCBI Taxonomy" id="6550"/>
    <lineage>
        <taxon>Eukaryota</taxon>
        <taxon>Metazoa</taxon>
        <taxon>Spiralia</taxon>
        <taxon>Lophotrochozoa</taxon>
        <taxon>Mollusca</taxon>
        <taxon>Bivalvia</taxon>
        <taxon>Autobranchia</taxon>
        <taxon>Pteriomorphia</taxon>
        <taxon>Mytilida</taxon>
        <taxon>Mytiloidea</taxon>
        <taxon>Mytilidae</taxon>
        <taxon>Mytilinae</taxon>
        <taxon>Mytilus</taxon>
    </lineage>
</organism>
<comment type="function">
    <text>Inhibitory action on contractions in several molluscan muscles.</text>
</comment>
<comment type="similarity">
    <text evidence="2">To M.edulis MIP I.</text>
</comment>
<name>CIP2_MYTED</name>
<feature type="peptide" id="PRO_0000044122" description="Contraction-inhibiting peptide 2">
    <location>
        <begin position="1"/>
        <end position="6"/>
    </location>
</feature>
<feature type="modified residue" description="Valine amide" evidence="1">
    <location>
        <position position="6"/>
    </location>
</feature>
<sequence>GAPMFV</sequence>
<reference key="1">
    <citation type="journal article" date="1988" name="Biochem. Biophys. Res. Commun.">
        <title>Structures and actions of Mytilus inhibitory peptides.</title>
        <authorList>
            <person name="Hirata T."/>
            <person name="Kubota I."/>
            <person name="Iwasawa N."/>
            <person name="Takabatake I."/>
            <person name="Ikeda T."/>
            <person name="Muneoka Y."/>
        </authorList>
    </citation>
    <scope>PROTEIN SEQUENCE</scope>
    <scope>AMIDATION AT VAL-6</scope>
    <source>
        <tissue>Pedal ganglion</tissue>
    </source>
</reference>
<evidence type="ECO:0000269" key="1">
    <source>
    </source>
</evidence>
<evidence type="ECO:0000305" key="2"/>
<proteinExistence type="evidence at protein level"/>